<reference key="1">
    <citation type="journal article" date="2008" name="DNA Res.">
        <title>Complete genome sequence and comparative analysis of the wild-type commensal Escherichia coli strain SE11 isolated from a healthy adult.</title>
        <authorList>
            <person name="Oshima K."/>
            <person name="Toh H."/>
            <person name="Ogura Y."/>
            <person name="Sasamoto H."/>
            <person name="Morita H."/>
            <person name="Park S.-H."/>
            <person name="Ooka T."/>
            <person name="Iyoda S."/>
            <person name="Taylor T.D."/>
            <person name="Hayashi T."/>
            <person name="Itoh K."/>
            <person name="Hattori M."/>
        </authorList>
    </citation>
    <scope>NUCLEOTIDE SEQUENCE [LARGE SCALE GENOMIC DNA]</scope>
    <source>
        <strain>SE11</strain>
    </source>
</reference>
<name>GLGX_ECOSE</name>
<organism>
    <name type="scientific">Escherichia coli (strain SE11)</name>
    <dbReference type="NCBI Taxonomy" id="409438"/>
    <lineage>
        <taxon>Bacteria</taxon>
        <taxon>Pseudomonadati</taxon>
        <taxon>Pseudomonadota</taxon>
        <taxon>Gammaproteobacteria</taxon>
        <taxon>Enterobacterales</taxon>
        <taxon>Enterobacteriaceae</taxon>
        <taxon>Escherichia</taxon>
    </lineage>
</organism>
<keyword id="KW-0119">Carbohydrate metabolism</keyword>
<keyword id="KW-0321">Glycogen metabolism</keyword>
<keyword id="KW-0326">Glycosidase</keyword>
<keyword id="KW-0378">Hydrolase</keyword>
<proteinExistence type="inferred from homology"/>
<protein>
    <recommendedName>
        <fullName evidence="1">Glycogen debranching enzyme</fullName>
        <ecNumber evidence="1">3.2.1.196</ecNumber>
    </recommendedName>
    <alternativeName>
        <fullName evidence="1">Limit dextrin alpha-1,6-maltotetraose-hydrolase</fullName>
    </alternativeName>
</protein>
<gene>
    <name evidence="1" type="primary">glgX</name>
    <name type="ordered locus">ECSE_3700</name>
</gene>
<sequence>MTRLAIGKPAPLGAHYDGQGVNFTLFSAHAERVELCVFDANGQEHRYDLPGHSGDIWHGYLPDARPGLRYGYRVHGPWQPAEGHRFNPAKLLIDPCARQIDGEFKDNPLLHAGHNEPDYRDNAAIAPKCVVVVDHYDWEDDAPPRTPWGSTIIYEAHVKGLTYLHPEIPVEIRGTYKALGHPVMINYLKQLGITALELLPVAQFASEPRLQRMGLSNYWGYNPVAMFALHPAYACSPETALDEFRDAIKALHKAGIEVILDIVLNHSAELDLDGPLFSLRGIDNRSYYWIREDGDYHNWTGCGNTLNLSHPAVVDYASACLRYWVETCHVDGFRFDLAAVMGRTPEFRQDAPLFTAIQNCPVLSQVKLIAEPWDIAPGGYQVGNFPPLFAEWNDHFRDAARRFWLHYDLPLGAFAGRFAASSDVFKRNGRLPSAAINLVTAHDGFTLRDCVCFNHKHNEANGEENRDGTNNNYSNNHGKEGLGGSLDLVERRRDSIHALLTTLLLSQGTPMLLAGDEHGHSQHGNNNAYCQDNQLTWLDWSQASSGLTAFTAALIHLRKRIPALVENRWWEEGDGNVRWLNRYAQPLSTDEWQNGPKQLQILLSDRFLIAINATLEVTEIVLPAGEWHAIPPFAGEDNPVITAVWQGPAHGLCVFQR</sequence>
<evidence type="ECO:0000255" key="1">
    <source>
        <dbReference type="HAMAP-Rule" id="MF_01248"/>
    </source>
</evidence>
<evidence type="ECO:0000256" key="2">
    <source>
        <dbReference type="SAM" id="MobiDB-lite"/>
    </source>
</evidence>
<feature type="chain" id="PRO_1000139869" description="Glycogen debranching enzyme">
    <location>
        <begin position="1"/>
        <end position="657"/>
    </location>
</feature>
<feature type="region of interest" description="Disordered" evidence="2">
    <location>
        <begin position="458"/>
        <end position="479"/>
    </location>
</feature>
<feature type="compositionally biased region" description="Basic and acidic residues" evidence="2">
    <location>
        <begin position="458"/>
        <end position="467"/>
    </location>
</feature>
<feature type="active site" description="Nucleophile" evidence="1">
    <location>
        <position position="336"/>
    </location>
</feature>
<feature type="active site" description="Proton donor" evidence="1">
    <location>
        <position position="371"/>
    </location>
</feature>
<feature type="site" description="Transition state stabilizer" evidence="1">
    <location>
        <position position="443"/>
    </location>
</feature>
<comment type="function">
    <text evidence="1">Removes maltotriose and maltotetraose chains that are attached by 1,6-alpha-linkage to the limit dextrin main chain, generating a debranched limit dextrin.</text>
</comment>
<comment type="catalytic activity">
    <reaction evidence="1">
        <text>Hydrolysis of (1-&gt;6)-alpha-D-glucosidic linkages to branches with degrees of polymerization of three or four glucose residues in limit dextrin.</text>
        <dbReference type="EC" id="3.2.1.196"/>
    </reaction>
</comment>
<comment type="pathway">
    <text evidence="1">Glycan degradation; glycogen degradation.</text>
</comment>
<comment type="similarity">
    <text evidence="1">Belongs to the glycosyl hydrolase 13 family.</text>
</comment>
<accession>B6I2Z7</accession>
<dbReference type="EC" id="3.2.1.196" evidence="1"/>
<dbReference type="EMBL" id="AP009240">
    <property type="protein sequence ID" value="BAG79224.1"/>
    <property type="molecule type" value="Genomic_DNA"/>
</dbReference>
<dbReference type="RefSeq" id="WP_000197375.1">
    <property type="nucleotide sequence ID" value="NC_011415.1"/>
</dbReference>
<dbReference type="SMR" id="B6I2Z7"/>
<dbReference type="CAZy" id="CBM48">
    <property type="family name" value="Carbohydrate-Binding Module Family 48"/>
</dbReference>
<dbReference type="CAZy" id="GH13">
    <property type="family name" value="Glycoside Hydrolase Family 13"/>
</dbReference>
<dbReference type="KEGG" id="ecy:ECSE_3700"/>
<dbReference type="HOGENOM" id="CLU_011725_1_1_6"/>
<dbReference type="UniPathway" id="UPA00165"/>
<dbReference type="Proteomes" id="UP000008199">
    <property type="component" value="Chromosome"/>
</dbReference>
<dbReference type="GO" id="GO:0004133">
    <property type="term" value="F:glycogen debranching enzyme activity"/>
    <property type="evidence" value="ECO:0007669"/>
    <property type="project" value="UniProtKB-UniRule"/>
</dbReference>
<dbReference type="GO" id="GO:0004553">
    <property type="term" value="F:hydrolase activity, hydrolyzing O-glycosyl compounds"/>
    <property type="evidence" value="ECO:0007669"/>
    <property type="project" value="InterPro"/>
</dbReference>
<dbReference type="GO" id="GO:0005980">
    <property type="term" value="P:glycogen catabolic process"/>
    <property type="evidence" value="ECO:0007669"/>
    <property type="project" value="UniProtKB-UniRule"/>
</dbReference>
<dbReference type="CDD" id="cd11326">
    <property type="entry name" value="AmyAc_Glg_debranch"/>
    <property type="match status" value="1"/>
</dbReference>
<dbReference type="CDD" id="cd02856">
    <property type="entry name" value="E_set_GDE_Isoamylase_N"/>
    <property type="match status" value="1"/>
</dbReference>
<dbReference type="FunFam" id="2.60.40.10:FF:000468">
    <property type="entry name" value="Glycogen debranching enzyme"/>
    <property type="match status" value="1"/>
</dbReference>
<dbReference type="FunFam" id="3.20.20.80:FF:000031">
    <property type="entry name" value="Glycogen debranching enzyme"/>
    <property type="match status" value="1"/>
</dbReference>
<dbReference type="Gene3D" id="3.20.20.80">
    <property type="entry name" value="Glycosidases"/>
    <property type="match status" value="1"/>
</dbReference>
<dbReference type="Gene3D" id="2.60.40.1180">
    <property type="entry name" value="Golgi alpha-mannosidase II"/>
    <property type="match status" value="1"/>
</dbReference>
<dbReference type="Gene3D" id="2.60.40.10">
    <property type="entry name" value="Immunoglobulins"/>
    <property type="match status" value="1"/>
</dbReference>
<dbReference type="HAMAP" id="MF_01248">
    <property type="entry name" value="GlgX"/>
    <property type="match status" value="1"/>
</dbReference>
<dbReference type="InterPro" id="IPR040784">
    <property type="entry name" value="GlgX_C"/>
</dbReference>
<dbReference type="InterPro" id="IPR044505">
    <property type="entry name" value="GlgX_Isoamylase_N_E_set"/>
</dbReference>
<dbReference type="InterPro" id="IPR006047">
    <property type="entry name" value="Glyco_hydro_13_cat_dom"/>
</dbReference>
<dbReference type="InterPro" id="IPR004193">
    <property type="entry name" value="Glyco_hydro_13_N"/>
</dbReference>
<dbReference type="InterPro" id="IPR013780">
    <property type="entry name" value="Glyco_hydro_b"/>
</dbReference>
<dbReference type="InterPro" id="IPR022844">
    <property type="entry name" value="Glycogen_debranch_bac"/>
</dbReference>
<dbReference type="InterPro" id="IPR011837">
    <property type="entry name" value="Glycogen_debranch_GlgX"/>
</dbReference>
<dbReference type="InterPro" id="IPR017853">
    <property type="entry name" value="Glycoside_hydrolase_SF"/>
</dbReference>
<dbReference type="InterPro" id="IPR013783">
    <property type="entry name" value="Ig-like_fold"/>
</dbReference>
<dbReference type="InterPro" id="IPR014756">
    <property type="entry name" value="Ig_E-set"/>
</dbReference>
<dbReference type="NCBIfam" id="TIGR02100">
    <property type="entry name" value="glgX_debranch"/>
    <property type="match status" value="1"/>
</dbReference>
<dbReference type="NCBIfam" id="NF002983">
    <property type="entry name" value="PRK03705.1"/>
    <property type="match status" value="1"/>
</dbReference>
<dbReference type="PANTHER" id="PTHR43002">
    <property type="entry name" value="GLYCOGEN DEBRANCHING ENZYME"/>
    <property type="match status" value="1"/>
</dbReference>
<dbReference type="Pfam" id="PF00128">
    <property type="entry name" value="Alpha-amylase"/>
    <property type="match status" value="1"/>
</dbReference>
<dbReference type="Pfam" id="PF02922">
    <property type="entry name" value="CBM_48"/>
    <property type="match status" value="1"/>
</dbReference>
<dbReference type="Pfam" id="PF18390">
    <property type="entry name" value="GlgX_C"/>
    <property type="match status" value="1"/>
</dbReference>
<dbReference type="SMART" id="SM00642">
    <property type="entry name" value="Aamy"/>
    <property type="match status" value="1"/>
</dbReference>
<dbReference type="SUPFAM" id="SSF51445">
    <property type="entry name" value="(Trans)glycosidases"/>
    <property type="match status" value="1"/>
</dbReference>
<dbReference type="SUPFAM" id="SSF81296">
    <property type="entry name" value="E set domains"/>
    <property type="match status" value="1"/>
</dbReference>